<comment type="subcellular location">
    <subcellularLocation>
        <location evidence="2">Cell membrane</location>
        <topology evidence="2">Multi-pass membrane protein</topology>
    </subcellularLocation>
</comment>
<reference key="1">
    <citation type="journal article" date="1995" name="Science">
        <title>Whole-genome random sequencing and assembly of Haemophilus influenzae Rd.</title>
        <authorList>
            <person name="Fleischmann R.D."/>
            <person name="Adams M.D."/>
            <person name="White O."/>
            <person name="Clayton R.A."/>
            <person name="Kirkness E.F."/>
            <person name="Kerlavage A.R."/>
            <person name="Bult C.J."/>
            <person name="Tomb J.-F."/>
            <person name="Dougherty B.A."/>
            <person name="Merrick J.M."/>
            <person name="McKenney K."/>
            <person name="Sutton G.G."/>
            <person name="FitzHugh W."/>
            <person name="Fields C.A."/>
            <person name="Gocayne J.D."/>
            <person name="Scott J.D."/>
            <person name="Shirley R."/>
            <person name="Liu L.-I."/>
            <person name="Glodek A."/>
            <person name="Kelley J.M."/>
            <person name="Weidman J.F."/>
            <person name="Phillips C.A."/>
            <person name="Spriggs T."/>
            <person name="Hedblom E."/>
            <person name="Cotton M.D."/>
            <person name="Utterback T.R."/>
            <person name="Hanna M.C."/>
            <person name="Nguyen D.T."/>
            <person name="Saudek D.M."/>
            <person name="Brandon R.C."/>
            <person name="Fine L.D."/>
            <person name="Fritchman J.L."/>
            <person name="Fuhrmann J.L."/>
            <person name="Geoghagen N.S.M."/>
            <person name="Gnehm C.L."/>
            <person name="McDonald L.A."/>
            <person name="Small K.V."/>
            <person name="Fraser C.M."/>
            <person name="Smith H.O."/>
            <person name="Venter J.C."/>
        </authorList>
    </citation>
    <scope>NUCLEOTIDE SEQUENCE [LARGE SCALE GENOMIC DNA]</scope>
    <source>
        <strain>ATCC 51907 / DSM 11121 / KW20 / Rd</strain>
    </source>
</reference>
<gene>
    <name type="ordered locus">HI_0825</name>
</gene>
<evidence type="ECO:0000255" key="1"/>
<evidence type="ECO:0000305" key="2"/>
<organism>
    <name type="scientific">Haemophilus influenzae (strain ATCC 51907 / DSM 11121 / KW20 / Rd)</name>
    <dbReference type="NCBI Taxonomy" id="71421"/>
    <lineage>
        <taxon>Bacteria</taxon>
        <taxon>Pseudomonadati</taxon>
        <taxon>Pseudomonadota</taxon>
        <taxon>Gammaproteobacteria</taxon>
        <taxon>Pasteurellales</taxon>
        <taxon>Pasteurellaceae</taxon>
        <taxon>Haemophilus</taxon>
    </lineage>
</organism>
<sequence>MLINFTQVLQDSWNFFRNQKKIMLQFVAILFIVQSASALLSFSVNDENKNDVLNLANTDITSFIFSVAITQILTSFIAAWGLTSIHKISLQNYRTLGETFSLTLRRFAGVILLDLLMVAPMLLGLGEAFAALLTKKSPSIMSLIAMLVGVWFFVRLNLTVVHYLSTQEALSQTIRKIWMRGNTRKGVLFIYTLLVYFLVPILIFQLSAFSNNAVFDMVIGIFTALLNIFMLVVTYRFYSLFMKD</sequence>
<feature type="chain" id="PRO_0000077958" description="Uncharacterized protein HI_0825">
    <location>
        <begin position="1"/>
        <end position="244"/>
    </location>
</feature>
<feature type="transmembrane region" description="Helical" evidence="1">
    <location>
        <begin position="22"/>
        <end position="42"/>
    </location>
</feature>
<feature type="transmembrane region" description="Helical" evidence="1">
    <location>
        <begin position="63"/>
        <end position="83"/>
    </location>
</feature>
<feature type="transmembrane region" description="Helical" evidence="1">
    <location>
        <begin position="110"/>
        <end position="130"/>
    </location>
</feature>
<feature type="transmembrane region" description="Helical" evidence="1">
    <location>
        <begin position="140"/>
        <end position="160"/>
    </location>
</feature>
<feature type="transmembrane region" description="Helical" evidence="1">
    <location>
        <begin position="186"/>
        <end position="206"/>
    </location>
</feature>
<feature type="transmembrane region" description="Helical" evidence="1">
    <location>
        <begin position="213"/>
        <end position="233"/>
    </location>
</feature>
<protein>
    <recommendedName>
        <fullName>Uncharacterized protein HI_0825</fullName>
    </recommendedName>
</protein>
<accession>P44056</accession>
<keyword id="KW-1003">Cell membrane</keyword>
<keyword id="KW-0472">Membrane</keyword>
<keyword id="KW-1185">Reference proteome</keyword>
<keyword id="KW-0812">Transmembrane</keyword>
<keyword id="KW-1133">Transmembrane helix</keyword>
<dbReference type="EMBL" id="L42023">
    <property type="protein sequence ID" value="AAC22498.1"/>
    <property type="molecule type" value="Genomic_DNA"/>
</dbReference>
<dbReference type="PIR" id="B64014">
    <property type="entry name" value="B64014"/>
</dbReference>
<dbReference type="RefSeq" id="NP_438985.1">
    <property type="nucleotide sequence ID" value="NC_000907.1"/>
</dbReference>
<dbReference type="STRING" id="71421.HI_0825"/>
<dbReference type="EnsemblBacteria" id="AAC22498">
    <property type="protein sequence ID" value="AAC22498"/>
    <property type="gene ID" value="HI_0825"/>
</dbReference>
<dbReference type="KEGG" id="hin:HI_0825"/>
<dbReference type="PATRIC" id="fig|71421.8.peg.866"/>
<dbReference type="eggNOG" id="ENOG5032HXG">
    <property type="taxonomic scope" value="Bacteria"/>
</dbReference>
<dbReference type="HOGENOM" id="CLU_096087_0_0_6"/>
<dbReference type="OrthoDB" id="5689171at2"/>
<dbReference type="BioCyc" id="HINF71421:G1GJ1-866-MONOMER"/>
<dbReference type="Proteomes" id="UP000000579">
    <property type="component" value="Chromosome"/>
</dbReference>
<dbReference type="GO" id="GO:0005886">
    <property type="term" value="C:plasma membrane"/>
    <property type="evidence" value="ECO:0007669"/>
    <property type="project" value="UniProtKB-SubCell"/>
</dbReference>
<name>Y825_HAEIN</name>
<proteinExistence type="predicted"/>